<keyword id="KW-0276">Fatty acid metabolism</keyword>
<keyword id="KW-0413">Isomerase</keyword>
<keyword id="KW-0442">Lipid degradation</keyword>
<keyword id="KW-0443">Lipid metabolism</keyword>
<keyword id="KW-0456">Lyase</keyword>
<keyword id="KW-0511">Multifunctional enzyme</keyword>
<keyword id="KW-0520">NAD</keyword>
<keyword id="KW-0560">Oxidoreductase</keyword>
<accession>A5F465</accession>
<accession>C3M345</accession>
<gene>
    <name evidence="1" type="primary">fadB</name>
    <name type="ordered locus">VC0395_A2534</name>
    <name type="ordered locus">VC395_0197</name>
</gene>
<organism>
    <name type="scientific">Vibrio cholerae serotype O1 (strain ATCC 39541 / Classical Ogawa 395 / O395)</name>
    <dbReference type="NCBI Taxonomy" id="345073"/>
    <lineage>
        <taxon>Bacteria</taxon>
        <taxon>Pseudomonadati</taxon>
        <taxon>Pseudomonadota</taxon>
        <taxon>Gammaproteobacteria</taxon>
        <taxon>Vibrionales</taxon>
        <taxon>Vibrionaceae</taxon>
        <taxon>Vibrio</taxon>
    </lineage>
</organism>
<reference key="1">
    <citation type="submission" date="2007-03" db="EMBL/GenBank/DDBJ databases">
        <authorList>
            <person name="Heidelberg J."/>
        </authorList>
    </citation>
    <scope>NUCLEOTIDE SEQUENCE [LARGE SCALE GENOMIC DNA]</scope>
    <source>
        <strain>ATCC 39541 / Classical Ogawa 395 / O395</strain>
    </source>
</reference>
<reference key="2">
    <citation type="journal article" date="2008" name="PLoS ONE">
        <title>A recalibrated molecular clock and independent origins for the cholera pandemic clones.</title>
        <authorList>
            <person name="Feng L."/>
            <person name="Reeves P.R."/>
            <person name="Lan R."/>
            <person name="Ren Y."/>
            <person name="Gao C."/>
            <person name="Zhou Z."/>
            <person name="Ren Y."/>
            <person name="Cheng J."/>
            <person name="Wang W."/>
            <person name="Wang J."/>
            <person name="Qian W."/>
            <person name="Li D."/>
            <person name="Wang L."/>
        </authorList>
    </citation>
    <scope>NUCLEOTIDE SEQUENCE [LARGE SCALE GENOMIC DNA]</scope>
    <source>
        <strain>ATCC 39541 / Classical Ogawa 395 / O395</strain>
    </source>
</reference>
<protein>
    <recommendedName>
        <fullName evidence="1">Fatty acid oxidation complex subunit alpha</fullName>
    </recommendedName>
    <domain>
        <recommendedName>
            <fullName evidence="1">Enoyl-CoA hydratase/Delta(3)-cis-Delta(2)-trans-enoyl-CoA isomerase/3-hydroxybutyryl-CoA epimerase</fullName>
            <ecNumber evidence="1">4.2.1.17</ecNumber>
            <ecNumber evidence="1">5.1.2.3</ecNumber>
            <ecNumber evidence="1">5.3.3.8</ecNumber>
        </recommendedName>
    </domain>
    <domain>
        <recommendedName>
            <fullName evidence="1">3-hydroxyacyl-CoA dehydrogenase</fullName>
            <ecNumber evidence="1">1.1.1.35</ecNumber>
        </recommendedName>
    </domain>
</protein>
<sequence>MIYQAKTLQVKQLANGIAELSFCAPASVNKLDLHTLESLDKALDALAADSSVKGLLLSSDKEAFIVGADITEFLGLFAKPEAELDEWLQFANRIFNKLEDLPFPTLSALKGHTLGGGCECVLATDFRIGDATTSIGLPETKLGIMPGFGGTVRLPRLIGADSAMEIITQGKACRAEEALKVGLLDAIVDSDKLIDSAITTLTQAIEEKLDWQKRRQQKTSALTLSKLEAMMSFTMAKGMVAQVAGKHYPAPMTSVVTIEEAARLPRDAALDIERKHFIKLAKSTEAQALVGIFLNDQYIKGLAKQSAKAASQDTQHAAVLGAGIMGGGIAYQSALKGVPVLMKDIAPHSLELGMTEAAKLLNKQLERGKIDGFKMAGILASITPSLHYAGIDQADVIVEAVVENPKVKAAVLSEVEGLVDAETILTSNTSTIPINLLAKSLKRPQNFCGMHFFNPVHRMPLVEIIRGEHTSEDTINRVVAYAAKMGKSPIVVNDCPGFFVNRVLFPYFAGFSLLMRDGANFTEIDKVMERQFGWPMGPAYLLDVVGIDTAHHAQAVMAEGFPTRMAKSGREAIDALYEAKKFGQKNGSGFYQYTVDKKGKPKKAFSDDVLAILAPVCGAPQNFDPQTLIERTMIPMINEVVLCLEEGIIASAQEADMALVYGLGFPPFRGGVFRYLDTIGIANYVAMAEKYADLGALYQVPQLLKNMAQQGTSFYSAQQASAL</sequence>
<comment type="function">
    <text evidence="1">Involved in the aerobic and anaerobic degradation of long-chain fatty acids via beta-oxidation cycle. Catalyzes the formation of 3-oxoacyl-CoA from enoyl-CoA via L-3-hydroxyacyl-CoA. It can also use D-3-hydroxyacyl-CoA and cis-3-enoyl-CoA as substrate.</text>
</comment>
<comment type="catalytic activity">
    <reaction evidence="1">
        <text>a (3S)-3-hydroxyacyl-CoA + NAD(+) = a 3-oxoacyl-CoA + NADH + H(+)</text>
        <dbReference type="Rhea" id="RHEA:22432"/>
        <dbReference type="ChEBI" id="CHEBI:15378"/>
        <dbReference type="ChEBI" id="CHEBI:57318"/>
        <dbReference type="ChEBI" id="CHEBI:57540"/>
        <dbReference type="ChEBI" id="CHEBI:57945"/>
        <dbReference type="ChEBI" id="CHEBI:90726"/>
        <dbReference type="EC" id="1.1.1.35"/>
    </reaction>
</comment>
<comment type="catalytic activity">
    <reaction evidence="1">
        <text>a (3S)-3-hydroxyacyl-CoA = a (2E)-enoyl-CoA + H2O</text>
        <dbReference type="Rhea" id="RHEA:16105"/>
        <dbReference type="ChEBI" id="CHEBI:15377"/>
        <dbReference type="ChEBI" id="CHEBI:57318"/>
        <dbReference type="ChEBI" id="CHEBI:58856"/>
        <dbReference type="EC" id="4.2.1.17"/>
    </reaction>
</comment>
<comment type="catalytic activity">
    <reaction evidence="1">
        <text>a 4-saturated-(3S)-3-hydroxyacyl-CoA = a (3E)-enoyl-CoA + H2O</text>
        <dbReference type="Rhea" id="RHEA:20724"/>
        <dbReference type="ChEBI" id="CHEBI:15377"/>
        <dbReference type="ChEBI" id="CHEBI:58521"/>
        <dbReference type="ChEBI" id="CHEBI:137480"/>
        <dbReference type="EC" id="4.2.1.17"/>
    </reaction>
</comment>
<comment type="catalytic activity">
    <reaction evidence="1">
        <text>(3S)-3-hydroxybutanoyl-CoA = (3R)-3-hydroxybutanoyl-CoA</text>
        <dbReference type="Rhea" id="RHEA:21760"/>
        <dbReference type="ChEBI" id="CHEBI:57315"/>
        <dbReference type="ChEBI" id="CHEBI:57316"/>
        <dbReference type="EC" id="5.1.2.3"/>
    </reaction>
</comment>
<comment type="catalytic activity">
    <reaction evidence="1">
        <text>a (3Z)-enoyl-CoA = a 4-saturated (2E)-enoyl-CoA</text>
        <dbReference type="Rhea" id="RHEA:45900"/>
        <dbReference type="ChEBI" id="CHEBI:85097"/>
        <dbReference type="ChEBI" id="CHEBI:85489"/>
        <dbReference type="EC" id="5.3.3.8"/>
    </reaction>
</comment>
<comment type="catalytic activity">
    <reaction evidence="1">
        <text>a (3E)-enoyl-CoA = a 4-saturated (2E)-enoyl-CoA</text>
        <dbReference type="Rhea" id="RHEA:45228"/>
        <dbReference type="ChEBI" id="CHEBI:58521"/>
        <dbReference type="ChEBI" id="CHEBI:85097"/>
        <dbReference type="EC" id="5.3.3.8"/>
    </reaction>
</comment>
<comment type="pathway">
    <text evidence="1">Lipid metabolism; fatty acid beta-oxidation.</text>
</comment>
<comment type="subunit">
    <text evidence="1">Heterotetramer of two alpha chains (FadB) and two beta chains (FadA).</text>
</comment>
<comment type="similarity">
    <text evidence="1">In the N-terminal section; belongs to the enoyl-CoA hydratase/isomerase family.</text>
</comment>
<comment type="similarity">
    <text evidence="1">In the C-terminal section; belongs to the 3-hydroxyacyl-CoA dehydrogenase family.</text>
</comment>
<dbReference type="EC" id="4.2.1.17" evidence="1"/>
<dbReference type="EC" id="5.1.2.3" evidence="1"/>
<dbReference type="EC" id="5.3.3.8" evidence="1"/>
<dbReference type="EC" id="1.1.1.35" evidence="1"/>
<dbReference type="EMBL" id="CP000627">
    <property type="protein sequence ID" value="ABQ19542.1"/>
    <property type="molecule type" value="Genomic_DNA"/>
</dbReference>
<dbReference type="EMBL" id="CP001235">
    <property type="protein sequence ID" value="ACP08224.1"/>
    <property type="molecule type" value="Genomic_DNA"/>
</dbReference>
<dbReference type="RefSeq" id="WP_000640239.1">
    <property type="nucleotide sequence ID" value="NZ_JAACZH010000018.1"/>
</dbReference>
<dbReference type="SMR" id="A5F465"/>
<dbReference type="KEGG" id="vco:VC0395_A2534"/>
<dbReference type="KEGG" id="vcr:VC395_0197"/>
<dbReference type="PATRIC" id="fig|345073.21.peg.186"/>
<dbReference type="eggNOG" id="COG1024">
    <property type="taxonomic scope" value="Bacteria"/>
</dbReference>
<dbReference type="eggNOG" id="COG1250">
    <property type="taxonomic scope" value="Bacteria"/>
</dbReference>
<dbReference type="HOGENOM" id="CLU_009834_16_3_6"/>
<dbReference type="OrthoDB" id="5389341at2"/>
<dbReference type="UniPathway" id="UPA00659"/>
<dbReference type="Proteomes" id="UP000000249">
    <property type="component" value="Chromosome 2"/>
</dbReference>
<dbReference type="GO" id="GO:0036125">
    <property type="term" value="C:fatty acid beta-oxidation multienzyme complex"/>
    <property type="evidence" value="ECO:0007669"/>
    <property type="project" value="InterPro"/>
</dbReference>
<dbReference type="GO" id="GO:0008692">
    <property type="term" value="F:3-hydroxybutyryl-CoA epimerase activity"/>
    <property type="evidence" value="ECO:0007669"/>
    <property type="project" value="UniProtKB-UniRule"/>
</dbReference>
<dbReference type="GO" id="GO:0004165">
    <property type="term" value="F:delta(3)-delta(2)-enoyl-CoA isomerase activity"/>
    <property type="evidence" value="ECO:0007669"/>
    <property type="project" value="UniProtKB-UniRule"/>
</dbReference>
<dbReference type="GO" id="GO:0004300">
    <property type="term" value="F:enoyl-CoA hydratase activity"/>
    <property type="evidence" value="ECO:0007669"/>
    <property type="project" value="UniProtKB-UniRule"/>
</dbReference>
<dbReference type="GO" id="GO:0016509">
    <property type="term" value="F:long-chain-3-hydroxyacyl-CoA dehydrogenase activity"/>
    <property type="evidence" value="ECO:0007669"/>
    <property type="project" value="TreeGrafter"/>
</dbReference>
<dbReference type="GO" id="GO:0070403">
    <property type="term" value="F:NAD+ binding"/>
    <property type="evidence" value="ECO:0007669"/>
    <property type="project" value="InterPro"/>
</dbReference>
<dbReference type="GO" id="GO:0006635">
    <property type="term" value="P:fatty acid beta-oxidation"/>
    <property type="evidence" value="ECO:0007669"/>
    <property type="project" value="UniProtKB-UniRule"/>
</dbReference>
<dbReference type="CDD" id="cd06558">
    <property type="entry name" value="crotonase-like"/>
    <property type="match status" value="1"/>
</dbReference>
<dbReference type="FunFam" id="1.10.1040.50:FF:000001">
    <property type="entry name" value="Fatty acid oxidation complex subunit alpha"/>
    <property type="match status" value="1"/>
</dbReference>
<dbReference type="FunFam" id="3.40.50.720:FF:000009">
    <property type="entry name" value="Fatty oxidation complex, alpha subunit"/>
    <property type="match status" value="1"/>
</dbReference>
<dbReference type="Gene3D" id="1.10.1040.50">
    <property type="match status" value="1"/>
</dbReference>
<dbReference type="Gene3D" id="3.90.226.10">
    <property type="entry name" value="2-enoyl-CoA Hydratase, Chain A, domain 1"/>
    <property type="match status" value="1"/>
</dbReference>
<dbReference type="Gene3D" id="3.40.50.720">
    <property type="entry name" value="NAD(P)-binding Rossmann-like Domain"/>
    <property type="match status" value="1"/>
</dbReference>
<dbReference type="HAMAP" id="MF_01621">
    <property type="entry name" value="FadB"/>
    <property type="match status" value="1"/>
</dbReference>
<dbReference type="InterPro" id="IPR006180">
    <property type="entry name" value="3-OHacyl-CoA_DH_CS"/>
</dbReference>
<dbReference type="InterPro" id="IPR006176">
    <property type="entry name" value="3-OHacyl-CoA_DH_NAD-bd"/>
</dbReference>
<dbReference type="InterPro" id="IPR006108">
    <property type="entry name" value="3HC_DH_C"/>
</dbReference>
<dbReference type="InterPro" id="IPR008927">
    <property type="entry name" value="6-PGluconate_DH-like_C_sf"/>
</dbReference>
<dbReference type="InterPro" id="IPR029045">
    <property type="entry name" value="ClpP/crotonase-like_dom_sf"/>
</dbReference>
<dbReference type="InterPro" id="IPR001753">
    <property type="entry name" value="Enoyl-CoA_hydra/iso"/>
</dbReference>
<dbReference type="InterPro" id="IPR050136">
    <property type="entry name" value="FA_oxidation_alpha_subunit"/>
</dbReference>
<dbReference type="InterPro" id="IPR012799">
    <property type="entry name" value="FadB"/>
</dbReference>
<dbReference type="InterPro" id="IPR036291">
    <property type="entry name" value="NAD(P)-bd_dom_sf"/>
</dbReference>
<dbReference type="NCBIfam" id="TIGR02437">
    <property type="entry name" value="FadB"/>
    <property type="match status" value="1"/>
</dbReference>
<dbReference type="NCBIfam" id="NF008727">
    <property type="entry name" value="PRK11730.1"/>
    <property type="match status" value="1"/>
</dbReference>
<dbReference type="PANTHER" id="PTHR43612">
    <property type="entry name" value="TRIFUNCTIONAL ENZYME SUBUNIT ALPHA"/>
    <property type="match status" value="1"/>
</dbReference>
<dbReference type="PANTHER" id="PTHR43612:SF3">
    <property type="entry name" value="TRIFUNCTIONAL ENZYME SUBUNIT ALPHA, MITOCHONDRIAL"/>
    <property type="match status" value="1"/>
</dbReference>
<dbReference type="Pfam" id="PF00725">
    <property type="entry name" value="3HCDH"/>
    <property type="match status" value="2"/>
</dbReference>
<dbReference type="Pfam" id="PF02737">
    <property type="entry name" value="3HCDH_N"/>
    <property type="match status" value="1"/>
</dbReference>
<dbReference type="Pfam" id="PF00378">
    <property type="entry name" value="ECH_1"/>
    <property type="match status" value="1"/>
</dbReference>
<dbReference type="SUPFAM" id="SSF48179">
    <property type="entry name" value="6-phosphogluconate dehydrogenase C-terminal domain-like"/>
    <property type="match status" value="2"/>
</dbReference>
<dbReference type="SUPFAM" id="SSF52096">
    <property type="entry name" value="ClpP/crotonase"/>
    <property type="match status" value="1"/>
</dbReference>
<dbReference type="SUPFAM" id="SSF51735">
    <property type="entry name" value="NAD(P)-binding Rossmann-fold domains"/>
    <property type="match status" value="1"/>
</dbReference>
<dbReference type="PROSITE" id="PS00067">
    <property type="entry name" value="3HCDH"/>
    <property type="match status" value="1"/>
</dbReference>
<feature type="chain" id="PRO_1000073635" description="Fatty acid oxidation complex subunit alpha">
    <location>
        <begin position="1"/>
        <end position="723"/>
    </location>
</feature>
<feature type="region of interest" description="Enoyl-CoA hydratase/isomerase" evidence="1">
    <location>
        <begin position="1"/>
        <end position="189"/>
    </location>
</feature>
<feature type="region of interest" description="3-hydroxyacyl-CoA dehydrogenase" evidence="1">
    <location>
        <begin position="311"/>
        <end position="723"/>
    </location>
</feature>
<feature type="active site" description="For 3-hydroxyacyl-CoA dehydrogenase activity" evidence="1">
    <location>
        <position position="451"/>
    </location>
</feature>
<feature type="binding site" evidence="1">
    <location>
        <position position="296"/>
    </location>
    <ligand>
        <name>substrate</name>
    </ligand>
</feature>
<feature type="binding site" evidence="1">
    <location>
        <position position="325"/>
    </location>
    <ligand>
        <name>NAD(+)</name>
        <dbReference type="ChEBI" id="CHEBI:57540"/>
    </ligand>
</feature>
<feature type="binding site" evidence="1">
    <location>
        <position position="344"/>
    </location>
    <ligand>
        <name>NAD(+)</name>
        <dbReference type="ChEBI" id="CHEBI:57540"/>
    </ligand>
</feature>
<feature type="binding site" evidence="1">
    <location>
        <begin position="401"/>
        <end position="403"/>
    </location>
    <ligand>
        <name>NAD(+)</name>
        <dbReference type="ChEBI" id="CHEBI:57540"/>
    </ligand>
</feature>
<feature type="binding site" evidence="1">
    <location>
        <position position="408"/>
    </location>
    <ligand>
        <name>NAD(+)</name>
        <dbReference type="ChEBI" id="CHEBI:57540"/>
    </ligand>
</feature>
<feature type="binding site" evidence="1">
    <location>
        <position position="430"/>
    </location>
    <ligand>
        <name>NAD(+)</name>
        <dbReference type="ChEBI" id="CHEBI:57540"/>
    </ligand>
</feature>
<feature type="binding site" evidence="1">
    <location>
        <position position="454"/>
    </location>
    <ligand>
        <name>NAD(+)</name>
        <dbReference type="ChEBI" id="CHEBI:57540"/>
    </ligand>
</feature>
<feature type="binding site" evidence="1">
    <location>
        <position position="501"/>
    </location>
    <ligand>
        <name>substrate</name>
    </ligand>
</feature>
<feature type="binding site" evidence="1">
    <location>
        <position position="661"/>
    </location>
    <ligand>
        <name>substrate</name>
    </ligand>
</feature>
<feature type="site" description="Important for catalytic activity" evidence="1">
    <location>
        <position position="119"/>
    </location>
</feature>
<feature type="site" description="Important for catalytic activity" evidence="1">
    <location>
        <position position="139"/>
    </location>
</feature>
<evidence type="ECO:0000255" key="1">
    <source>
        <dbReference type="HAMAP-Rule" id="MF_01621"/>
    </source>
</evidence>
<proteinExistence type="inferred from homology"/>
<name>FADB_VIBC3</name>